<evidence type="ECO:0000255" key="1">
    <source>
        <dbReference type="HAMAP-Rule" id="MF_01020"/>
    </source>
</evidence>
<organism>
    <name type="scientific">Cupriavidus metallidurans (strain ATCC 43123 / DSM 2839 / NBRC 102507 / CH34)</name>
    <name type="common">Ralstonia metallidurans</name>
    <dbReference type="NCBI Taxonomy" id="266264"/>
    <lineage>
        <taxon>Bacteria</taxon>
        <taxon>Pseudomonadati</taxon>
        <taxon>Pseudomonadota</taxon>
        <taxon>Betaproteobacteria</taxon>
        <taxon>Burkholderiales</taxon>
        <taxon>Burkholderiaceae</taxon>
        <taxon>Cupriavidus</taxon>
    </lineage>
</organism>
<name>HIS2_CUPMC</name>
<feature type="chain" id="PRO_0000319660" description="Phosphoribosyl-ATP pyrophosphatase">
    <location>
        <begin position="1"/>
        <end position="122"/>
    </location>
</feature>
<comment type="catalytic activity">
    <reaction evidence="1">
        <text>1-(5-phospho-beta-D-ribosyl)-ATP + H2O = 1-(5-phospho-beta-D-ribosyl)-5'-AMP + diphosphate + H(+)</text>
        <dbReference type="Rhea" id="RHEA:22828"/>
        <dbReference type="ChEBI" id="CHEBI:15377"/>
        <dbReference type="ChEBI" id="CHEBI:15378"/>
        <dbReference type="ChEBI" id="CHEBI:33019"/>
        <dbReference type="ChEBI" id="CHEBI:59457"/>
        <dbReference type="ChEBI" id="CHEBI:73183"/>
        <dbReference type="EC" id="3.6.1.31"/>
    </reaction>
</comment>
<comment type="pathway">
    <text evidence="1">Amino-acid biosynthesis; L-histidine biosynthesis; L-histidine from 5-phospho-alpha-D-ribose 1-diphosphate: step 2/9.</text>
</comment>
<comment type="subcellular location">
    <subcellularLocation>
        <location evidence="1">Cytoplasm</location>
    </subcellularLocation>
</comment>
<comment type="similarity">
    <text evidence="1">Belongs to the PRA-PH family.</text>
</comment>
<dbReference type="EC" id="3.6.1.31" evidence="1"/>
<dbReference type="EMBL" id="CP000352">
    <property type="protein sequence ID" value="ABF10112.1"/>
    <property type="molecule type" value="Genomic_DNA"/>
</dbReference>
<dbReference type="RefSeq" id="WP_008643059.1">
    <property type="nucleotide sequence ID" value="NC_007973.1"/>
</dbReference>
<dbReference type="SMR" id="Q1LIB4"/>
<dbReference type="STRING" id="266264.Rmet_3240"/>
<dbReference type="KEGG" id="rme:Rmet_3240"/>
<dbReference type="eggNOG" id="COG0140">
    <property type="taxonomic scope" value="Bacteria"/>
</dbReference>
<dbReference type="HOGENOM" id="CLU_123337_1_2_4"/>
<dbReference type="UniPathway" id="UPA00031">
    <property type="reaction ID" value="UER00007"/>
</dbReference>
<dbReference type="Proteomes" id="UP000002429">
    <property type="component" value="Chromosome"/>
</dbReference>
<dbReference type="GO" id="GO:0005737">
    <property type="term" value="C:cytoplasm"/>
    <property type="evidence" value="ECO:0007669"/>
    <property type="project" value="UniProtKB-SubCell"/>
</dbReference>
<dbReference type="GO" id="GO:0005524">
    <property type="term" value="F:ATP binding"/>
    <property type="evidence" value="ECO:0007669"/>
    <property type="project" value="UniProtKB-KW"/>
</dbReference>
<dbReference type="GO" id="GO:0004636">
    <property type="term" value="F:phosphoribosyl-ATP diphosphatase activity"/>
    <property type="evidence" value="ECO:0007669"/>
    <property type="project" value="UniProtKB-UniRule"/>
</dbReference>
<dbReference type="GO" id="GO:0000105">
    <property type="term" value="P:L-histidine biosynthetic process"/>
    <property type="evidence" value="ECO:0007669"/>
    <property type="project" value="UniProtKB-UniRule"/>
</dbReference>
<dbReference type="CDD" id="cd11534">
    <property type="entry name" value="NTP-PPase_HisIE_like"/>
    <property type="match status" value="1"/>
</dbReference>
<dbReference type="Gene3D" id="1.10.287.1080">
    <property type="entry name" value="MazG-like"/>
    <property type="match status" value="1"/>
</dbReference>
<dbReference type="HAMAP" id="MF_01020">
    <property type="entry name" value="HisE"/>
    <property type="match status" value="1"/>
</dbReference>
<dbReference type="InterPro" id="IPR008179">
    <property type="entry name" value="HisE"/>
</dbReference>
<dbReference type="InterPro" id="IPR021130">
    <property type="entry name" value="PRib-ATP_PPHydrolase-like"/>
</dbReference>
<dbReference type="NCBIfam" id="TIGR03188">
    <property type="entry name" value="histidine_hisI"/>
    <property type="match status" value="1"/>
</dbReference>
<dbReference type="NCBIfam" id="NF001611">
    <property type="entry name" value="PRK00400.1-3"/>
    <property type="match status" value="1"/>
</dbReference>
<dbReference type="PANTHER" id="PTHR42945">
    <property type="entry name" value="HISTIDINE BIOSYNTHESIS BIFUNCTIONAL PROTEIN"/>
    <property type="match status" value="1"/>
</dbReference>
<dbReference type="PANTHER" id="PTHR42945:SF9">
    <property type="entry name" value="HISTIDINE BIOSYNTHESIS BIFUNCTIONAL PROTEIN HISIE"/>
    <property type="match status" value="1"/>
</dbReference>
<dbReference type="Pfam" id="PF01503">
    <property type="entry name" value="PRA-PH"/>
    <property type="match status" value="1"/>
</dbReference>
<dbReference type="SUPFAM" id="SSF101386">
    <property type="entry name" value="all-alpha NTP pyrophosphatases"/>
    <property type="match status" value="1"/>
</dbReference>
<sequence length="122" mass="13301">MSDNLSQADILARVAATLESRKPENGGDPEKSYVAKLFKKGDDAILKKIGEEATETVMAAKDARAADLADEAVSKVVYEVADLWFHTMVLLARIGRTPEDVVNELARREGLSGLVEKASRKE</sequence>
<accession>Q1LIB4</accession>
<protein>
    <recommendedName>
        <fullName evidence="1">Phosphoribosyl-ATP pyrophosphatase</fullName>
        <shortName evidence="1">PRA-PH</shortName>
        <ecNumber evidence="1">3.6.1.31</ecNumber>
    </recommendedName>
</protein>
<gene>
    <name evidence="1" type="primary">hisE</name>
    <name type="ordered locus">Rmet_3240</name>
</gene>
<keyword id="KW-0028">Amino-acid biosynthesis</keyword>
<keyword id="KW-0067">ATP-binding</keyword>
<keyword id="KW-0963">Cytoplasm</keyword>
<keyword id="KW-0368">Histidine biosynthesis</keyword>
<keyword id="KW-0378">Hydrolase</keyword>
<keyword id="KW-0547">Nucleotide-binding</keyword>
<keyword id="KW-1185">Reference proteome</keyword>
<proteinExistence type="inferred from homology"/>
<reference key="1">
    <citation type="journal article" date="2010" name="PLoS ONE">
        <title>The complete genome sequence of Cupriavidus metallidurans strain CH34, a master survivalist in harsh and anthropogenic environments.</title>
        <authorList>
            <person name="Janssen P.J."/>
            <person name="Van Houdt R."/>
            <person name="Moors H."/>
            <person name="Monsieurs P."/>
            <person name="Morin N."/>
            <person name="Michaux A."/>
            <person name="Benotmane M.A."/>
            <person name="Leys N."/>
            <person name="Vallaeys T."/>
            <person name="Lapidus A."/>
            <person name="Monchy S."/>
            <person name="Medigue C."/>
            <person name="Taghavi S."/>
            <person name="McCorkle S."/>
            <person name="Dunn J."/>
            <person name="van der Lelie D."/>
            <person name="Mergeay M."/>
        </authorList>
    </citation>
    <scope>NUCLEOTIDE SEQUENCE [LARGE SCALE GENOMIC DNA]</scope>
    <source>
        <strain>ATCC 43123 / DSM 2839 / NBRC 102507 / CH34</strain>
    </source>
</reference>